<reference key="1">
    <citation type="journal article" date="2005" name="Nucleic Acids Res.">
        <title>Genome dynamics and diversity of Shigella species, the etiologic agents of bacillary dysentery.</title>
        <authorList>
            <person name="Yang F."/>
            <person name="Yang J."/>
            <person name="Zhang X."/>
            <person name="Chen L."/>
            <person name="Jiang Y."/>
            <person name="Yan Y."/>
            <person name="Tang X."/>
            <person name="Wang J."/>
            <person name="Xiong Z."/>
            <person name="Dong J."/>
            <person name="Xue Y."/>
            <person name="Zhu Y."/>
            <person name="Xu X."/>
            <person name="Sun L."/>
            <person name="Chen S."/>
            <person name="Nie H."/>
            <person name="Peng J."/>
            <person name="Xu J."/>
            <person name="Wang Y."/>
            <person name="Yuan Z."/>
            <person name="Wen Y."/>
            <person name="Yao Z."/>
            <person name="Shen Y."/>
            <person name="Qiang B."/>
            <person name="Hou Y."/>
            <person name="Yu J."/>
            <person name="Jin Q."/>
        </authorList>
    </citation>
    <scope>NUCLEOTIDE SEQUENCE [LARGE SCALE GENOMIC DNA]</scope>
    <source>
        <strain>Sd197</strain>
    </source>
</reference>
<protein>
    <recommendedName>
        <fullName evidence="1">Glutamyl-tRNA reductase</fullName>
        <shortName evidence="1">GluTR</shortName>
        <ecNumber evidence="1">1.2.1.70</ecNumber>
    </recommendedName>
</protein>
<accession>Q32GZ7</accession>
<evidence type="ECO:0000255" key="1">
    <source>
        <dbReference type="HAMAP-Rule" id="MF_00087"/>
    </source>
</evidence>
<organism>
    <name type="scientific">Shigella dysenteriae serotype 1 (strain Sd197)</name>
    <dbReference type="NCBI Taxonomy" id="300267"/>
    <lineage>
        <taxon>Bacteria</taxon>
        <taxon>Pseudomonadati</taxon>
        <taxon>Pseudomonadota</taxon>
        <taxon>Gammaproteobacteria</taxon>
        <taxon>Enterobacterales</taxon>
        <taxon>Enterobacteriaceae</taxon>
        <taxon>Shigella</taxon>
    </lineage>
</organism>
<dbReference type="EC" id="1.2.1.70" evidence="1"/>
<dbReference type="EMBL" id="CP000034">
    <property type="protein sequence ID" value="ABB61408.1"/>
    <property type="molecule type" value="Genomic_DNA"/>
</dbReference>
<dbReference type="RefSeq" id="WP_005023559.1">
    <property type="nucleotide sequence ID" value="NC_007606.1"/>
</dbReference>
<dbReference type="RefSeq" id="YP_402899.1">
    <property type="nucleotide sequence ID" value="NC_007606.1"/>
</dbReference>
<dbReference type="SMR" id="Q32GZ7"/>
<dbReference type="STRING" id="300267.SDY_1259"/>
<dbReference type="EnsemblBacteria" id="ABB61408">
    <property type="protein sequence ID" value="ABB61408"/>
    <property type="gene ID" value="SDY_1259"/>
</dbReference>
<dbReference type="KEGG" id="sdy:SDY_1259"/>
<dbReference type="PATRIC" id="fig|300267.13.peg.1496"/>
<dbReference type="HOGENOM" id="CLU_035113_2_2_6"/>
<dbReference type="UniPathway" id="UPA00251">
    <property type="reaction ID" value="UER00316"/>
</dbReference>
<dbReference type="Proteomes" id="UP000002716">
    <property type="component" value="Chromosome"/>
</dbReference>
<dbReference type="GO" id="GO:0008883">
    <property type="term" value="F:glutamyl-tRNA reductase activity"/>
    <property type="evidence" value="ECO:0007669"/>
    <property type="project" value="UniProtKB-UniRule"/>
</dbReference>
<dbReference type="GO" id="GO:0050661">
    <property type="term" value="F:NADP binding"/>
    <property type="evidence" value="ECO:0007669"/>
    <property type="project" value="InterPro"/>
</dbReference>
<dbReference type="GO" id="GO:0019353">
    <property type="term" value="P:protoporphyrinogen IX biosynthetic process from glutamate"/>
    <property type="evidence" value="ECO:0007669"/>
    <property type="project" value="TreeGrafter"/>
</dbReference>
<dbReference type="CDD" id="cd05213">
    <property type="entry name" value="NAD_bind_Glutamyl_tRNA_reduct"/>
    <property type="match status" value="1"/>
</dbReference>
<dbReference type="FunFam" id="3.30.460.30:FF:000001">
    <property type="entry name" value="Glutamyl-tRNA reductase"/>
    <property type="match status" value="1"/>
</dbReference>
<dbReference type="FunFam" id="3.40.50.720:FF:000031">
    <property type="entry name" value="Glutamyl-tRNA reductase"/>
    <property type="match status" value="1"/>
</dbReference>
<dbReference type="Gene3D" id="3.30.460.30">
    <property type="entry name" value="Glutamyl-tRNA reductase, N-terminal domain"/>
    <property type="match status" value="1"/>
</dbReference>
<dbReference type="Gene3D" id="3.40.50.720">
    <property type="entry name" value="NAD(P)-binding Rossmann-like Domain"/>
    <property type="match status" value="1"/>
</dbReference>
<dbReference type="HAMAP" id="MF_00087">
    <property type="entry name" value="Glu_tRNA_reductase"/>
    <property type="match status" value="1"/>
</dbReference>
<dbReference type="InterPro" id="IPR000343">
    <property type="entry name" value="4pyrrol_synth_GluRdtase"/>
</dbReference>
<dbReference type="InterPro" id="IPR015896">
    <property type="entry name" value="4pyrrol_synth_GluRdtase_dimer"/>
</dbReference>
<dbReference type="InterPro" id="IPR015895">
    <property type="entry name" value="4pyrrol_synth_GluRdtase_N"/>
</dbReference>
<dbReference type="InterPro" id="IPR018214">
    <property type="entry name" value="GluRdtase_CS"/>
</dbReference>
<dbReference type="InterPro" id="IPR036453">
    <property type="entry name" value="GluRdtase_dimer_dom_sf"/>
</dbReference>
<dbReference type="InterPro" id="IPR036343">
    <property type="entry name" value="GluRdtase_N_sf"/>
</dbReference>
<dbReference type="InterPro" id="IPR036291">
    <property type="entry name" value="NAD(P)-bd_dom_sf"/>
</dbReference>
<dbReference type="InterPro" id="IPR006151">
    <property type="entry name" value="Shikm_DH/Glu-tRNA_Rdtase"/>
</dbReference>
<dbReference type="NCBIfam" id="TIGR01035">
    <property type="entry name" value="hemA"/>
    <property type="match status" value="1"/>
</dbReference>
<dbReference type="PANTHER" id="PTHR43013">
    <property type="entry name" value="GLUTAMYL-TRNA REDUCTASE"/>
    <property type="match status" value="1"/>
</dbReference>
<dbReference type="PANTHER" id="PTHR43013:SF1">
    <property type="entry name" value="GLUTAMYL-TRNA REDUCTASE"/>
    <property type="match status" value="1"/>
</dbReference>
<dbReference type="Pfam" id="PF00745">
    <property type="entry name" value="GlutR_dimer"/>
    <property type="match status" value="1"/>
</dbReference>
<dbReference type="Pfam" id="PF05201">
    <property type="entry name" value="GlutR_N"/>
    <property type="match status" value="1"/>
</dbReference>
<dbReference type="Pfam" id="PF01488">
    <property type="entry name" value="Shikimate_DH"/>
    <property type="match status" value="1"/>
</dbReference>
<dbReference type="PIRSF" id="PIRSF000445">
    <property type="entry name" value="4pyrrol_synth_GluRdtase"/>
    <property type="match status" value="1"/>
</dbReference>
<dbReference type="SUPFAM" id="SSF69742">
    <property type="entry name" value="Glutamyl tRNA-reductase catalytic, N-terminal domain"/>
    <property type="match status" value="1"/>
</dbReference>
<dbReference type="SUPFAM" id="SSF69075">
    <property type="entry name" value="Glutamyl tRNA-reductase dimerization domain"/>
    <property type="match status" value="1"/>
</dbReference>
<dbReference type="SUPFAM" id="SSF51735">
    <property type="entry name" value="NAD(P)-binding Rossmann-fold domains"/>
    <property type="match status" value="1"/>
</dbReference>
<dbReference type="PROSITE" id="PS00747">
    <property type="entry name" value="GLUTR"/>
    <property type="match status" value="1"/>
</dbReference>
<sequence>MTLLALGINHKTAPVSLRERVSFSPDKLDQALDSLLAQPMVQGGVVLSTCNRTELYLSVEEQDNLQEALIRWLCDYHNLNEEDLRKSLYWHQDNDAVSHLMRVASGLDSLVLGEPQILGQVKKAFADSQKGHMKASELERMFQKSFSVAKRVRTETDIGASAVSVAFAACTLARQIFESLSTVTVLLVGAGETIELVARHLREHKVQKMIIANRTRERAQILADEVGAEVIALSDVDERLREADIIISSTASPLPIIGKGMVERALKSRRNQPMLLVDIAVPRDVEPEVGKLANAYLYSVDDLQSIISHNLAQRKAAAVEAETIVAQETSEFMAWLRAQSASETIREYRSQAEQVRDELTAKALAALEQGGDAQAIMQDLAWKLTNRLIHAPTKLLQQAARDGDNERLNILRDSLGLE</sequence>
<keyword id="KW-0521">NADP</keyword>
<keyword id="KW-0560">Oxidoreductase</keyword>
<keyword id="KW-0627">Porphyrin biosynthesis</keyword>
<keyword id="KW-1185">Reference proteome</keyword>
<name>HEM1_SHIDS</name>
<feature type="chain" id="PRO_1000004697" description="Glutamyl-tRNA reductase">
    <location>
        <begin position="1"/>
        <end position="418"/>
    </location>
</feature>
<feature type="active site" description="Nucleophile" evidence="1">
    <location>
        <position position="50"/>
    </location>
</feature>
<feature type="binding site" evidence="1">
    <location>
        <begin position="49"/>
        <end position="52"/>
    </location>
    <ligand>
        <name>substrate</name>
    </ligand>
</feature>
<feature type="binding site" evidence="1">
    <location>
        <position position="109"/>
    </location>
    <ligand>
        <name>substrate</name>
    </ligand>
</feature>
<feature type="binding site" evidence="1">
    <location>
        <begin position="114"/>
        <end position="116"/>
    </location>
    <ligand>
        <name>substrate</name>
    </ligand>
</feature>
<feature type="binding site" evidence="1">
    <location>
        <position position="120"/>
    </location>
    <ligand>
        <name>substrate</name>
    </ligand>
</feature>
<feature type="binding site" evidence="1">
    <location>
        <begin position="189"/>
        <end position="194"/>
    </location>
    <ligand>
        <name>NADP(+)</name>
        <dbReference type="ChEBI" id="CHEBI:58349"/>
    </ligand>
</feature>
<feature type="site" description="Important for activity" evidence="1">
    <location>
        <position position="99"/>
    </location>
</feature>
<comment type="function">
    <text evidence="1">Catalyzes the NADPH-dependent reduction of glutamyl-tRNA(Glu) to glutamate 1-semialdehyde (GSA).</text>
</comment>
<comment type="catalytic activity">
    <reaction evidence="1">
        <text>(S)-4-amino-5-oxopentanoate + tRNA(Glu) + NADP(+) = L-glutamyl-tRNA(Glu) + NADPH + H(+)</text>
        <dbReference type="Rhea" id="RHEA:12344"/>
        <dbReference type="Rhea" id="RHEA-COMP:9663"/>
        <dbReference type="Rhea" id="RHEA-COMP:9680"/>
        <dbReference type="ChEBI" id="CHEBI:15378"/>
        <dbReference type="ChEBI" id="CHEBI:57501"/>
        <dbReference type="ChEBI" id="CHEBI:57783"/>
        <dbReference type="ChEBI" id="CHEBI:58349"/>
        <dbReference type="ChEBI" id="CHEBI:78442"/>
        <dbReference type="ChEBI" id="CHEBI:78520"/>
        <dbReference type="EC" id="1.2.1.70"/>
    </reaction>
</comment>
<comment type="pathway">
    <text evidence="1">Porphyrin-containing compound metabolism; protoporphyrin-IX biosynthesis; 5-aminolevulinate from L-glutamyl-tRNA(Glu): step 1/2.</text>
</comment>
<comment type="subunit">
    <text evidence="1">Homodimer.</text>
</comment>
<comment type="domain">
    <text evidence="1">Possesses an unusual extended V-shaped dimeric structure with each monomer consisting of three distinct domains arranged along a curved 'spinal' alpha-helix. The N-terminal catalytic domain specifically recognizes the glutamate moiety of the substrate. The second domain is the NADPH-binding domain, and the third C-terminal domain is responsible for dimerization.</text>
</comment>
<comment type="miscellaneous">
    <text evidence="1">During catalysis, the active site Cys acts as a nucleophile attacking the alpha-carbonyl group of tRNA-bound glutamate with the formation of a thioester intermediate between enzyme and glutamate, and the concomitant release of tRNA(Glu). The thioester intermediate is finally reduced by direct hydride transfer from NADPH, to form the product GSA.</text>
</comment>
<comment type="similarity">
    <text evidence="1">Belongs to the glutamyl-tRNA reductase family.</text>
</comment>
<proteinExistence type="inferred from homology"/>
<gene>
    <name evidence="1" type="primary">hemA</name>
    <name type="ordered locus">SDY_1259</name>
</gene>